<feature type="chain" id="PRO_1000018182" description="Tryptophan synthase alpha chain">
    <location>
        <begin position="1"/>
        <end position="253"/>
    </location>
</feature>
<feature type="active site" description="Proton acceptor" evidence="1">
    <location>
        <position position="48"/>
    </location>
</feature>
<feature type="active site" description="Proton acceptor" evidence="1">
    <location>
        <position position="59"/>
    </location>
</feature>
<organism>
    <name type="scientific">Caldicellulosiruptor saccharolyticus (strain ATCC 43494 / DSM 8903 / Tp8T 6331)</name>
    <dbReference type="NCBI Taxonomy" id="351627"/>
    <lineage>
        <taxon>Bacteria</taxon>
        <taxon>Bacillati</taxon>
        <taxon>Bacillota</taxon>
        <taxon>Bacillota incertae sedis</taxon>
        <taxon>Caldicellulosiruptorales</taxon>
        <taxon>Caldicellulosiruptoraceae</taxon>
        <taxon>Caldicellulosiruptor</taxon>
    </lineage>
</organism>
<dbReference type="EC" id="4.2.1.20" evidence="1"/>
<dbReference type="EMBL" id="CP000679">
    <property type="protein sequence ID" value="ABP67808.1"/>
    <property type="molecule type" value="Genomic_DNA"/>
</dbReference>
<dbReference type="RefSeq" id="WP_011917734.1">
    <property type="nucleotide sequence ID" value="NC_009437.1"/>
</dbReference>
<dbReference type="SMR" id="A4XLM3"/>
<dbReference type="STRING" id="351627.Csac_2230"/>
<dbReference type="KEGG" id="csc:Csac_2230"/>
<dbReference type="eggNOG" id="COG0159">
    <property type="taxonomic scope" value="Bacteria"/>
</dbReference>
<dbReference type="HOGENOM" id="CLU_016734_0_0_9"/>
<dbReference type="OrthoDB" id="9804578at2"/>
<dbReference type="UniPathway" id="UPA00035">
    <property type="reaction ID" value="UER00044"/>
</dbReference>
<dbReference type="Proteomes" id="UP000000256">
    <property type="component" value="Chromosome"/>
</dbReference>
<dbReference type="GO" id="GO:0005829">
    <property type="term" value="C:cytosol"/>
    <property type="evidence" value="ECO:0007669"/>
    <property type="project" value="TreeGrafter"/>
</dbReference>
<dbReference type="GO" id="GO:0004834">
    <property type="term" value="F:tryptophan synthase activity"/>
    <property type="evidence" value="ECO:0007669"/>
    <property type="project" value="UniProtKB-UniRule"/>
</dbReference>
<dbReference type="CDD" id="cd04724">
    <property type="entry name" value="Tryptophan_synthase_alpha"/>
    <property type="match status" value="1"/>
</dbReference>
<dbReference type="FunFam" id="3.20.20.70:FF:000037">
    <property type="entry name" value="Tryptophan synthase alpha chain"/>
    <property type="match status" value="1"/>
</dbReference>
<dbReference type="Gene3D" id="3.20.20.70">
    <property type="entry name" value="Aldolase class I"/>
    <property type="match status" value="1"/>
</dbReference>
<dbReference type="HAMAP" id="MF_00131">
    <property type="entry name" value="Trp_synth_alpha"/>
    <property type="match status" value="1"/>
</dbReference>
<dbReference type="InterPro" id="IPR013785">
    <property type="entry name" value="Aldolase_TIM"/>
</dbReference>
<dbReference type="InterPro" id="IPR011060">
    <property type="entry name" value="RibuloseP-bd_barrel"/>
</dbReference>
<dbReference type="InterPro" id="IPR018204">
    <property type="entry name" value="Trp_synthase_alpha_AS"/>
</dbReference>
<dbReference type="InterPro" id="IPR002028">
    <property type="entry name" value="Trp_synthase_suA"/>
</dbReference>
<dbReference type="NCBIfam" id="TIGR00262">
    <property type="entry name" value="trpA"/>
    <property type="match status" value="1"/>
</dbReference>
<dbReference type="PANTHER" id="PTHR43406:SF1">
    <property type="entry name" value="TRYPTOPHAN SYNTHASE ALPHA CHAIN, CHLOROPLASTIC"/>
    <property type="match status" value="1"/>
</dbReference>
<dbReference type="PANTHER" id="PTHR43406">
    <property type="entry name" value="TRYPTOPHAN SYNTHASE, ALPHA CHAIN"/>
    <property type="match status" value="1"/>
</dbReference>
<dbReference type="Pfam" id="PF00290">
    <property type="entry name" value="Trp_syntA"/>
    <property type="match status" value="1"/>
</dbReference>
<dbReference type="SUPFAM" id="SSF51366">
    <property type="entry name" value="Ribulose-phoshate binding barrel"/>
    <property type="match status" value="1"/>
</dbReference>
<dbReference type="PROSITE" id="PS00167">
    <property type="entry name" value="TRP_SYNTHASE_ALPHA"/>
    <property type="match status" value="1"/>
</dbReference>
<evidence type="ECO:0000255" key="1">
    <source>
        <dbReference type="HAMAP-Rule" id="MF_00131"/>
    </source>
</evidence>
<name>TRPA_CALS8</name>
<reference key="1">
    <citation type="submission" date="2007-04" db="EMBL/GenBank/DDBJ databases">
        <title>Genome sequence of the thermophilic hydrogen-producing bacterium Caldicellulosiruptor saccharolyticus DSM 8903.</title>
        <authorList>
            <person name="Copeland A."/>
            <person name="Lucas S."/>
            <person name="Lapidus A."/>
            <person name="Barry K."/>
            <person name="Detter J.C."/>
            <person name="Glavina del Rio T."/>
            <person name="Hammon N."/>
            <person name="Israni S."/>
            <person name="Dalin E."/>
            <person name="Tice H."/>
            <person name="Pitluck S."/>
            <person name="Kiss H."/>
            <person name="Brettin T."/>
            <person name="Bruce D."/>
            <person name="Han C."/>
            <person name="Schmutz J."/>
            <person name="Larimer F."/>
            <person name="Land M."/>
            <person name="Hauser L."/>
            <person name="Kyrpides N."/>
            <person name="Lykidis A."/>
            <person name="van de Werken H.J.G."/>
            <person name="Verhaart M.R.A."/>
            <person name="VanFossen A.L."/>
            <person name="Lewis D.L."/>
            <person name="Nichols J.D."/>
            <person name="Goorissen H.P."/>
            <person name="van Niel E.W.J."/>
            <person name="Stams F.J.M."/>
            <person name="Willquist K.U."/>
            <person name="Ward D.E."/>
            <person name="van der Oost J."/>
            <person name="Kelly R.M."/>
            <person name="Kengen S.M.W."/>
            <person name="Richardson P."/>
        </authorList>
    </citation>
    <scope>NUCLEOTIDE SEQUENCE [LARGE SCALE GENOMIC DNA]</scope>
    <source>
        <strain>ATCC 43494 / DSM 8903 / Tp8T 6331</strain>
    </source>
</reference>
<comment type="function">
    <text evidence="1">The alpha subunit is responsible for the aldol cleavage of indoleglycerol phosphate to indole and glyceraldehyde 3-phosphate.</text>
</comment>
<comment type="catalytic activity">
    <reaction evidence="1">
        <text>(1S,2R)-1-C-(indol-3-yl)glycerol 3-phosphate + L-serine = D-glyceraldehyde 3-phosphate + L-tryptophan + H2O</text>
        <dbReference type="Rhea" id="RHEA:10532"/>
        <dbReference type="ChEBI" id="CHEBI:15377"/>
        <dbReference type="ChEBI" id="CHEBI:33384"/>
        <dbReference type="ChEBI" id="CHEBI:57912"/>
        <dbReference type="ChEBI" id="CHEBI:58866"/>
        <dbReference type="ChEBI" id="CHEBI:59776"/>
        <dbReference type="EC" id="4.2.1.20"/>
    </reaction>
</comment>
<comment type="pathway">
    <text evidence="1">Amino-acid biosynthesis; L-tryptophan biosynthesis; L-tryptophan from chorismate: step 5/5.</text>
</comment>
<comment type="subunit">
    <text evidence="1">Tetramer of two alpha and two beta chains.</text>
</comment>
<comment type="similarity">
    <text evidence="1">Belongs to the TrpA family.</text>
</comment>
<sequence>MNLIDKKFEELKIKGKKAFIGYTTFGYPTKGETLDYIKLIYSYVDVLELGFPFSDPIADGEVIQRASVKALKEDIKLDHLFYSIEKFKKDKPIAIMLYANTVYKRGIEKFFKDCKDFGADAVIIPDISYEESAEFKAACRENGVHYIDLISISSIERAKMIAKTSKGFVYCVTRKGVTGFKGEIDKSIYELLSELKKVTSTPLAVGFGIKSKEDVLKLKEVADGIVIGSAIINKIDEGKEDLVSFLETIRSVL</sequence>
<proteinExistence type="inferred from homology"/>
<protein>
    <recommendedName>
        <fullName evidence="1">Tryptophan synthase alpha chain</fullName>
        <ecNumber evidence="1">4.2.1.20</ecNumber>
    </recommendedName>
</protein>
<keyword id="KW-0028">Amino-acid biosynthesis</keyword>
<keyword id="KW-0057">Aromatic amino acid biosynthesis</keyword>
<keyword id="KW-0456">Lyase</keyword>
<keyword id="KW-0822">Tryptophan biosynthesis</keyword>
<gene>
    <name evidence="1" type="primary">trpA</name>
    <name type="ordered locus">Csac_2230</name>
</gene>
<accession>A4XLM3</accession>